<feature type="chain" id="PRO_1000212146" description="Putative HTH-type transcriptional regulatory protein YN1551_1579">
    <location>
        <begin position="1"/>
        <end position="310"/>
    </location>
</feature>
<feature type="domain" description="HTH cro/C1-type" evidence="1">
    <location>
        <begin position="125"/>
        <end position="180"/>
    </location>
</feature>
<feature type="DNA-binding region" description="H-T-H motif" evidence="1">
    <location>
        <begin position="136"/>
        <end position="155"/>
    </location>
</feature>
<evidence type="ECO:0000255" key="1">
    <source>
        <dbReference type="HAMAP-Rule" id="MF_00584"/>
    </source>
</evidence>
<accession>C3NHQ7</accession>
<dbReference type="EMBL" id="CP001404">
    <property type="protein sequence ID" value="ACP48667.1"/>
    <property type="molecule type" value="Genomic_DNA"/>
</dbReference>
<dbReference type="RefSeq" id="WP_012716132.1">
    <property type="nucleotide sequence ID" value="NC_012623.1"/>
</dbReference>
<dbReference type="SMR" id="C3NHQ7"/>
<dbReference type="GeneID" id="7809172"/>
<dbReference type="KEGG" id="sin:YN1551_1579"/>
<dbReference type="HOGENOM" id="CLU_075726_1_0_2"/>
<dbReference type="Proteomes" id="UP000006818">
    <property type="component" value="Chromosome"/>
</dbReference>
<dbReference type="GO" id="GO:0003677">
    <property type="term" value="F:DNA binding"/>
    <property type="evidence" value="ECO:0007669"/>
    <property type="project" value="UniProtKB-KW"/>
</dbReference>
<dbReference type="GO" id="GO:0003700">
    <property type="term" value="F:DNA-binding transcription factor activity"/>
    <property type="evidence" value="ECO:0007669"/>
    <property type="project" value="UniProtKB-UniRule"/>
</dbReference>
<dbReference type="CDD" id="cd00093">
    <property type="entry name" value="HTH_XRE"/>
    <property type="match status" value="1"/>
</dbReference>
<dbReference type="Gene3D" id="1.10.260.40">
    <property type="entry name" value="lambda repressor-like DNA-binding domains"/>
    <property type="match status" value="1"/>
</dbReference>
<dbReference type="HAMAP" id="MF_00584">
    <property type="entry name" value="HTH_type_cro_C1"/>
    <property type="match status" value="1"/>
</dbReference>
<dbReference type="InterPro" id="IPR020886">
    <property type="entry name" value="Arc_TR_HTH"/>
</dbReference>
<dbReference type="InterPro" id="IPR001387">
    <property type="entry name" value="Cro/C1-type_HTH"/>
</dbReference>
<dbReference type="InterPro" id="IPR010982">
    <property type="entry name" value="Lambda_DNA-bd_dom_sf"/>
</dbReference>
<dbReference type="Pfam" id="PF01381">
    <property type="entry name" value="HTH_3"/>
    <property type="match status" value="1"/>
</dbReference>
<dbReference type="SMART" id="SM00530">
    <property type="entry name" value="HTH_XRE"/>
    <property type="match status" value="1"/>
</dbReference>
<dbReference type="SUPFAM" id="SSF47413">
    <property type="entry name" value="lambda repressor-like DNA-binding domains"/>
    <property type="match status" value="1"/>
</dbReference>
<dbReference type="PROSITE" id="PS50943">
    <property type="entry name" value="HTH_CROC1"/>
    <property type="match status" value="1"/>
</dbReference>
<name>Y1579_SACI1</name>
<reference key="1">
    <citation type="journal article" date="2009" name="Proc. Natl. Acad. Sci. U.S.A.">
        <title>Biogeography of the Sulfolobus islandicus pan-genome.</title>
        <authorList>
            <person name="Reno M.L."/>
            <person name="Held N.L."/>
            <person name="Fields C.J."/>
            <person name="Burke P.V."/>
            <person name="Whitaker R.J."/>
        </authorList>
    </citation>
    <scope>NUCLEOTIDE SEQUENCE [LARGE SCALE GENOMIC DNA]</scope>
    <source>
        <strain>Y.N.15.51 / Yellowstone #2</strain>
    </source>
</reference>
<protein>
    <recommendedName>
        <fullName evidence="1">Putative HTH-type transcriptional regulatory protein YN1551_1579</fullName>
    </recommendedName>
</protein>
<sequence length="310" mass="35574">MSKKIINEVIDILEDKKYTYTMIEYPEHNRKSVDIVLNSKEPTLIRVSEDKVTKEEISDLKKIAVSTLTASLVVTNEEEEDIVSVKADNVFAVSPEGFKKVINGEKIFLYRTRGGIFIKIRNYILKHKREEMGYSIGDVAKFLGVSRKAIYDYEKGDSDVSLEVAEKLIDLFGDDIIGDVIWDSIKGKKEVIEEDITEFSPESFKSKLIYKLKENGLNILSLKLTAADLIVKDNENNRYLVTIENKDYNKSMKKFYEAKKLSSYTKSELLIIIRTSKMLKECEDLGYKTYEENDIHSLIDEIKGSNGRQS</sequence>
<organism>
    <name type="scientific">Saccharolobus islandicus (strain Y.N.15.51 / Yellowstone #2)</name>
    <name type="common">Sulfolobus islandicus</name>
    <dbReference type="NCBI Taxonomy" id="419942"/>
    <lineage>
        <taxon>Archaea</taxon>
        <taxon>Thermoproteota</taxon>
        <taxon>Thermoprotei</taxon>
        <taxon>Sulfolobales</taxon>
        <taxon>Sulfolobaceae</taxon>
        <taxon>Saccharolobus</taxon>
    </lineage>
</organism>
<keyword id="KW-0238">DNA-binding</keyword>
<keyword id="KW-0804">Transcription</keyword>
<keyword id="KW-0805">Transcription regulation</keyword>
<proteinExistence type="inferred from homology"/>
<gene>
    <name type="ordered locus">YN1551_1579</name>
</gene>